<dbReference type="EC" id="6.1.1.4" evidence="1"/>
<dbReference type="EMBL" id="AE000511">
    <property type="protein sequence ID" value="AAD08585.1"/>
    <property type="molecule type" value="Genomic_DNA"/>
</dbReference>
<dbReference type="PIR" id="C64713">
    <property type="entry name" value="C64713"/>
</dbReference>
<dbReference type="RefSeq" id="NP_208338.1">
    <property type="nucleotide sequence ID" value="NC_000915.1"/>
</dbReference>
<dbReference type="RefSeq" id="WP_000345715.1">
    <property type="nucleotide sequence ID" value="NC_018939.1"/>
</dbReference>
<dbReference type="SMR" id="P56457"/>
<dbReference type="DIP" id="DIP-3469N"/>
<dbReference type="FunCoup" id="P56457">
    <property type="interactions" value="388"/>
</dbReference>
<dbReference type="IntAct" id="P56457">
    <property type="interactions" value="2"/>
</dbReference>
<dbReference type="MINT" id="P56457"/>
<dbReference type="STRING" id="85962.HP_1547"/>
<dbReference type="PaxDb" id="85962-C694_08015"/>
<dbReference type="EnsemblBacteria" id="AAD08585">
    <property type="protein sequence ID" value="AAD08585"/>
    <property type="gene ID" value="HP_1547"/>
</dbReference>
<dbReference type="KEGG" id="heo:C694_08015"/>
<dbReference type="KEGG" id="hpy:HP_1547"/>
<dbReference type="PATRIC" id="fig|85962.47.peg.1662"/>
<dbReference type="eggNOG" id="COG0495">
    <property type="taxonomic scope" value="Bacteria"/>
</dbReference>
<dbReference type="InParanoid" id="P56457"/>
<dbReference type="OrthoDB" id="9810365at2"/>
<dbReference type="PhylomeDB" id="P56457"/>
<dbReference type="Proteomes" id="UP000000429">
    <property type="component" value="Chromosome"/>
</dbReference>
<dbReference type="GO" id="GO:0005829">
    <property type="term" value="C:cytosol"/>
    <property type="evidence" value="ECO:0000318"/>
    <property type="project" value="GO_Central"/>
</dbReference>
<dbReference type="GO" id="GO:0002161">
    <property type="term" value="F:aminoacyl-tRNA deacylase activity"/>
    <property type="evidence" value="ECO:0007669"/>
    <property type="project" value="InterPro"/>
</dbReference>
<dbReference type="GO" id="GO:0005524">
    <property type="term" value="F:ATP binding"/>
    <property type="evidence" value="ECO:0007669"/>
    <property type="project" value="UniProtKB-UniRule"/>
</dbReference>
<dbReference type="GO" id="GO:0004823">
    <property type="term" value="F:leucine-tRNA ligase activity"/>
    <property type="evidence" value="ECO:0000318"/>
    <property type="project" value="GO_Central"/>
</dbReference>
<dbReference type="GO" id="GO:0006429">
    <property type="term" value="P:leucyl-tRNA aminoacylation"/>
    <property type="evidence" value="ECO:0000318"/>
    <property type="project" value="GO_Central"/>
</dbReference>
<dbReference type="CDD" id="cd00812">
    <property type="entry name" value="LeuRS_core"/>
    <property type="match status" value="1"/>
</dbReference>
<dbReference type="FunFam" id="1.10.730.10:FF:000100">
    <property type="entry name" value="Leucine--tRNA ligase"/>
    <property type="match status" value="1"/>
</dbReference>
<dbReference type="FunFam" id="3.40.50.620:FF:000003">
    <property type="entry name" value="Leucine--tRNA ligase"/>
    <property type="match status" value="1"/>
</dbReference>
<dbReference type="FunFam" id="3.40.50.620:FF:000212">
    <property type="entry name" value="Leucine--tRNA ligase"/>
    <property type="match status" value="1"/>
</dbReference>
<dbReference type="Gene3D" id="3.10.20.590">
    <property type="match status" value="1"/>
</dbReference>
<dbReference type="Gene3D" id="3.40.50.620">
    <property type="entry name" value="HUPs"/>
    <property type="match status" value="2"/>
</dbReference>
<dbReference type="Gene3D" id="1.10.730.10">
    <property type="entry name" value="Isoleucyl-tRNA Synthetase, Domain 1"/>
    <property type="match status" value="2"/>
</dbReference>
<dbReference type="HAMAP" id="MF_00049_B">
    <property type="entry name" value="Leu_tRNA_synth_B"/>
    <property type="match status" value="1"/>
</dbReference>
<dbReference type="InterPro" id="IPR001412">
    <property type="entry name" value="aa-tRNA-synth_I_CS"/>
</dbReference>
<dbReference type="InterPro" id="IPR002300">
    <property type="entry name" value="aa-tRNA-synth_Ia"/>
</dbReference>
<dbReference type="InterPro" id="IPR002302">
    <property type="entry name" value="Leu-tRNA-ligase"/>
</dbReference>
<dbReference type="InterPro" id="IPR025709">
    <property type="entry name" value="Leu_tRNA-synth_edit"/>
</dbReference>
<dbReference type="InterPro" id="IPR015413">
    <property type="entry name" value="Methionyl/Leucyl_tRNA_Synth"/>
</dbReference>
<dbReference type="InterPro" id="IPR014729">
    <property type="entry name" value="Rossmann-like_a/b/a_fold"/>
</dbReference>
<dbReference type="InterPro" id="IPR009080">
    <property type="entry name" value="tRNAsynth_Ia_anticodon-bd"/>
</dbReference>
<dbReference type="InterPro" id="IPR009008">
    <property type="entry name" value="Val/Leu/Ile-tRNA-synth_edit"/>
</dbReference>
<dbReference type="NCBIfam" id="TIGR00396">
    <property type="entry name" value="leuS_bact"/>
    <property type="match status" value="1"/>
</dbReference>
<dbReference type="PANTHER" id="PTHR43740:SF2">
    <property type="entry name" value="LEUCINE--TRNA LIGASE, MITOCHONDRIAL"/>
    <property type="match status" value="1"/>
</dbReference>
<dbReference type="PANTHER" id="PTHR43740">
    <property type="entry name" value="LEUCYL-TRNA SYNTHETASE"/>
    <property type="match status" value="1"/>
</dbReference>
<dbReference type="Pfam" id="PF00133">
    <property type="entry name" value="tRNA-synt_1"/>
    <property type="match status" value="1"/>
</dbReference>
<dbReference type="Pfam" id="PF13603">
    <property type="entry name" value="tRNA-synt_1_2"/>
    <property type="match status" value="1"/>
</dbReference>
<dbReference type="Pfam" id="PF09334">
    <property type="entry name" value="tRNA-synt_1g"/>
    <property type="match status" value="1"/>
</dbReference>
<dbReference type="PRINTS" id="PR00985">
    <property type="entry name" value="TRNASYNTHLEU"/>
</dbReference>
<dbReference type="SUPFAM" id="SSF47323">
    <property type="entry name" value="Anticodon-binding domain of a subclass of class I aminoacyl-tRNA synthetases"/>
    <property type="match status" value="1"/>
</dbReference>
<dbReference type="SUPFAM" id="SSF52374">
    <property type="entry name" value="Nucleotidylyl transferase"/>
    <property type="match status" value="1"/>
</dbReference>
<dbReference type="SUPFAM" id="SSF50677">
    <property type="entry name" value="ValRS/IleRS/LeuRS editing domain"/>
    <property type="match status" value="1"/>
</dbReference>
<dbReference type="PROSITE" id="PS00178">
    <property type="entry name" value="AA_TRNA_LIGASE_I"/>
    <property type="match status" value="1"/>
</dbReference>
<gene>
    <name evidence="1" type="primary">leuS</name>
    <name type="ordered locus">HP_1547</name>
</gene>
<sequence length="806" mass="93164">MDFINIEKKWQEFWWKNKSFEPKDDFNLPKKYILSMLPYPSGEIHMGHVRNYTIGDALARYYRLHHYNVLHPMGFDSFGMPAENAAIKHGIHPKTWTYENIENMQKEFEALGFSFSKNREFATSDPDYTKFEQRFFIDLWEKGLIYRKKAMLNWCPNDKTVLANEQVIDGRCWRCDTEVIQKELYQYYLKITNYAEELLKDLEALEDHWPSQVLIMQKNWIGKSSGLQFGFKIADECLKACNGIQEIEVFTTRADTIYGVTYIAIAPEHPLVEHAIKQVSQEVSKMIKAILNTTQRERALEKKGAFLGIYAIHPLTKQKIPVWVANFALANYGSGALMGVPACDERDFEFANLYHIPIKVITQSPQNLPHTKEEVLKNSGEWSDLSSSVAREQIIAYFEKENLGKRVINYRLQDWGVSRQRYWGAPIPMIHCNHCGIVPETQLPVTLPEDIVIDGEGNPLEKHASWKFTQCPKCHKNALRETDTMDTFIQSSWYFLRYTTPKNQRENQAFDQNYLKYFMPVDTYIGGIEHAILHLLYARFFTKALRDLGYLHLDEPFKQLITQGMVLKNGAKMSKSKGNVVSPKEILKKYGADAARLFILFAAPPAKELEWNDSALEGAHRFIKRLYDKANAINPTTSKPEFKEVSLNEAQKLGRKKVYEALKKSHEIFNKAESAYSFNTLIASCMEALNALSAQNNERILCEGYFVLLQILEPIIPHTAWELSERLFKRENFKPIAIDEDALMEDFMTLGLTINGKRRAELKVNINASKEEIIVLAKKELEKYLENASVKKEIYVPNKLVNFVIA</sequence>
<organism>
    <name type="scientific">Helicobacter pylori (strain ATCC 700392 / 26695)</name>
    <name type="common">Campylobacter pylori</name>
    <dbReference type="NCBI Taxonomy" id="85962"/>
    <lineage>
        <taxon>Bacteria</taxon>
        <taxon>Pseudomonadati</taxon>
        <taxon>Campylobacterota</taxon>
        <taxon>Epsilonproteobacteria</taxon>
        <taxon>Campylobacterales</taxon>
        <taxon>Helicobacteraceae</taxon>
        <taxon>Helicobacter</taxon>
    </lineage>
</organism>
<proteinExistence type="inferred from homology"/>
<keyword id="KW-0030">Aminoacyl-tRNA synthetase</keyword>
<keyword id="KW-0067">ATP-binding</keyword>
<keyword id="KW-0963">Cytoplasm</keyword>
<keyword id="KW-0436">Ligase</keyword>
<keyword id="KW-0547">Nucleotide-binding</keyword>
<keyword id="KW-0648">Protein biosynthesis</keyword>
<keyword id="KW-1185">Reference proteome</keyword>
<comment type="catalytic activity">
    <reaction evidence="1">
        <text>tRNA(Leu) + L-leucine + ATP = L-leucyl-tRNA(Leu) + AMP + diphosphate</text>
        <dbReference type="Rhea" id="RHEA:11688"/>
        <dbReference type="Rhea" id="RHEA-COMP:9613"/>
        <dbReference type="Rhea" id="RHEA-COMP:9622"/>
        <dbReference type="ChEBI" id="CHEBI:30616"/>
        <dbReference type="ChEBI" id="CHEBI:33019"/>
        <dbReference type="ChEBI" id="CHEBI:57427"/>
        <dbReference type="ChEBI" id="CHEBI:78442"/>
        <dbReference type="ChEBI" id="CHEBI:78494"/>
        <dbReference type="ChEBI" id="CHEBI:456215"/>
        <dbReference type="EC" id="6.1.1.4"/>
    </reaction>
</comment>
<comment type="subcellular location">
    <subcellularLocation>
        <location evidence="1">Cytoplasm</location>
    </subcellularLocation>
</comment>
<comment type="similarity">
    <text evidence="1">Belongs to the class-I aminoacyl-tRNA synthetase family.</text>
</comment>
<accession>P56457</accession>
<name>SYL_HELPY</name>
<evidence type="ECO:0000255" key="1">
    <source>
        <dbReference type="HAMAP-Rule" id="MF_00049"/>
    </source>
</evidence>
<feature type="chain" id="PRO_0000152026" description="Leucine--tRNA ligase">
    <location>
        <begin position="1"/>
        <end position="806"/>
    </location>
</feature>
<feature type="short sequence motif" description="'HIGH' region">
    <location>
        <begin position="38"/>
        <end position="48"/>
    </location>
</feature>
<feature type="short sequence motif" description="'KMSKS' region">
    <location>
        <begin position="572"/>
        <end position="576"/>
    </location>
</feature>
<feature type="binding site" evidence="1">
    <location>
        <position position="575"/>
    </location>
    <ligand>
        <name>ATP</name>
        <dbReference type="ChEBI" id="CHEBI:30616"/>
    </ligand>
</feature>
<reference key="1">
    <citation type="journal article" date="1997" name="Nature">
        <title>The complete genome sequence of the gastric pathogen Helicobacter pylori.</title>
        <authorList>
            <person name="Tomb J.-F."/>
            <person name="White O."/>
            <person name="Kerlavage A.R."/>
            <person name="Clayton R.A."/>
            <person name="Sutton G.G."/>
            <person name="Fleischmann R.D."/>
            <person name="Ketchum K.A."/>
            <person name="Klenk H.-P."/>
            <person name="Gill S.R."/>
            <person name="Dougherty B.A."/>
            <person name="Nelson K.E."/>
            <person name="Quackenbush J."/>
            <person name="Zhou L."/>
            <person name="Kirkness E.F."/>
            <person name="Peterson S.N."/>
            <person name="Loftus B.J."/>
            <person name="Richardson D.L."/>
            <person name="Dodson R.J."/>
            <person name="Khalak H.G."/>
            <person name="Glodek A."/>
            <person name="McKenney K."/>
            <person name="FitzGerald L.M."/>
            <person name="Lee N."/>
            <person name="Adams M.D."/>
            <person name="Hickey E.K."/>
            <person name="Berg D.E."/>
            <person name="Gocayne J.D."/>
            <person name="Utterback T.R."/>
            <person name="Peterson J.D."/>
            <person name="Kelley J.M."/>
            <person name="Cotton M.D."/>
            <person name="Weidman J.F."/>
            <person name="Fujii C."/>
            <person name="Bowman C."/>
            <person name="Watthey L."/>
            <person name="Wallin E."/>
            <person name="Hayes W.S."/>
            <person name="Borodovsky M."/>
            <person name="Karp P.D."/>
            <person name="Smith H.O."/>
            <person name="Fraser C.M."/>
            <person name="Venter J.C."/>
        </authorList>
    </citation>
    <scope>NUCLEOTIDE SEQUENCE [LARGE SCALE GENOMIC DNA]</scope>
    <source>
        <strain>ATCC 700392 / 26695</strain>
    </source>
</reference>
<protein>
    <recommendedName>
        <fullName evidence="1">Leucine--tRNA ligase</fullName>
        <ecNumber evidence="1">6.1.1.4</ecNumber>
    </recommendedName>
    <alternativeName>
        <fullName evidence="1">Leucyl-tRNA synthetase</fullName>
        <shortName evidence="1">LeuRS</shortName>
    </alternativeName>
</protein>